<gene>
    <name evidence="1" type="primary">rsmH</name>
    <name type="synonym">mraW</name>
    <name type="ordered locus">Erum4860</name>
    <name type="ordered locus">ERWE_CDS_05080</name>
</gene>
<accession>Q5HB44</accession>
<accession>Q5FEI4</accession>
<name>RSMH_EHRRW</name>
<dbReference type="EC" id="2.1.1.199" evidence="1"/>
<dbReference type="EMBL" id="CR767821">
    <property type="protein sequence ID" value="CAH58214.1"/>
    <property type="molecule type" value="Genomic_DNA"/>
</dbReference>
<dbReference type="EMBL" id="CR925678">
    <property type="protein sequence ID" value="CAI27002.1"/>
    <property type="molecule type" value="Genomic_DNA"/>
</dbReference>
<dbReference type="RefSeq" id="WP_011155167.1">
    <property type="nucleotide sequence ID" value="NC_005295.2"/>
</dbReference>
<dbReference type="SMR" id="Q5HB44"/>
<dbReference type="GeneID" id="33058301"/>
<dbReference type="KEGG" id="eru:Erum4860"/>
<dbReference type="KEGG" id="erw:ERWE_CDS_05080"/>
<dbReference type="eggNOG" id="COG0275">
    <property type="taxonomic scope" value="Bacteria"/>
</dbReference>
<dbReference type="HOGENOM" id="CLU_038422_1_1_5"/>
<dbReference type="Proteomes" id="UP000001021">
    <property type="component" value="Chromosome"/>
</dbReference>
<dbReference type="GO" id="GO:0005737">
    <property type="term" value="C:cytoplasm"/>
    <property type="evidence" value="ECO:0007669"/>
    <property type="project" value="UniProtKB-SubCell"/>
</dbReference>
<dbReference type="GO" id="GO:0071424">
    <property type="term" value="F:rRNA (cytosine-N4-)-methyltransferase activity"/>
    <property type="evidence" value="ECO:0007669"/>
    <property type="project" value="UniProtKB-UniRule"/>
</dbReference>
<dbReference type="GO" id="GO:0070475">
    <property type="term" value="P:rRNA base methylation"/>
    <property type="evidence" value="ECO:0007669"/>
    <property type="project" value="UniProtKB-UniRule"/>
</dbReference>
<dbReference type="CDD" id="cd02440">
    <property type="entry name" value="AdoMet_MTases"/>
    <property type="match status" value="1"/>
</dbReference>
<dbReference type="Gene3D" id="1.10.150.170">
    <property type="entry name" value="Putative methyltransferase TM0872, insert domain"/>
    <property type="match status" value="1"/>
</dbReference>
<dbReference type="Gene3D" id="3.40.50.150">
    <property type="entry name" value="Vaccinia Virus protein VP39"/>
    <property type="match status" value="1"/>
</dbReference>
<dbReference type="HAMAP" id="MF_01007">
    <property type="entry name" value="16SrRNA_methyltr_H"/>
    <property type="match status" value="1"/>
</dbReference>
<dbReference type="InterPro" id="IPR002903">
    <property type="entry name" value="RsmH"/>
</dbReference>
<dbReference type="InterPro" id="IPR023397">
    <property type="entry name" value="SAM-dep_MeTrfase_MraW_recog"/>
</dbReference>
<dbReference type="InterPro" id="IPR029063">
    <property type="entry name" value="SAM-dependent_MTases_sf"/>
</dbReference>
<dbReference type="NCBIfam" id="TIGR00006">
    <property type="entry name" value="16S rRNA (cytosine(1402)-N(4))-methyltransferase RsmH"/>
    <property type="match status" value="1"/>
</dbReference>
<dbReference type="PANTHER" id="PTHR11265:SF0">
    <property type="entry name" value="12S RRNA N4-METHYLCYTIDINE METHYLTRANSFERASE"/>
    <property type="match status" value="1"/>
</dbReference>
<dbReference type="PANTHER" id="PTHR11265">
    <property type="entry name" value="S-ADENOSYL-METHYLTRANSFERASE MRAW"/>
    <property type="match status" value="1"/>
</dbReference>
<dbReference type="Pfam" id="PF01795">
    <property type="entry name" value="Methyltransf_5"/>
    <property type="match status" value="1"/>
</dbReference>
<dbReference type="PIRSF" id="PIRSF004486">
    <property type="entry name" value="MraW"/>
    <property type="match status" value="1"/>
</dbReference>
<dbReference type="SUPFAM" id="SSF81799">
    <property type="entry name" value="Putative methyltransferase TM0872, insert domain"/>
    <property type="match status" value="1"/>
</dbReference>
<dbReference type="SUPFAM" id="SSF53335">
    <property type="entry name" value="S-adenosyl-L-methionine-dependent methyltransferases"/>
    <property type="match status" value="1"/>
</dbReference>
<feature type="chain" id="PRO_0000108624" description="Ribosomal RNA small subunit methyltransferase H">
    <location>
        <begin position="1"/>
        <end position="301"/>
    </location>
</feature>
<feature type="binding site" evidence="1">
    <location>
        <begin position="31"/>
        <end position="33"/>
    </location>
    <ligand>
        <name>S-adenosyl-L-methionine</name>
        <dbReference type="ChEBI" id="CHEBI:59789"/>
    </ligand>
</feature>
<feature type="binding site" evidence="1">
    <location>
        <position position="49"/>
    </location>
    <ligand>
        <name>S-adenosyl-L-methionine</name>
        <dbReference type="ChEBI" id="CHEBI:59789"/>
    </ligand>
</feature>
<feature type="binding site" evidence="1">
    <location>
        <position position="76"/>
    </location>
    <ligand>
        <name>S-adenosyl-L-methionine</name>
        <dbReference type="ChEBI" id="CHEBI:59789"/>
    </ligand>
</feature>
<feature type="binding site" evidence="1">
    <location>
        <position position="97"/>
    </location>
    <ligand>
        <name>S-adenosyl-L-methionine</name>
        <dbReference type="ChEBI" id="CHEBI:59789"/>
    </ligand>
</feature>
<feature type="binding site" evidence="1">
    <location>
        <position position="104"/>
    </location>
    <ligand>
        <name>S-adenosyl-L-methionine</name>
        <dbReference type="ChEBI" id="CHEBI:59789"/>
    </ligand>
</feature>
<evidence type="ECO:0000255" key="1">
    <source>
        <dbReference type="HAMAP-Rule" id="MF_01007"/>
    </source>
</evidence>
<comment type="function">
    <text evidence="1">Specifically methylates the N4 position of cytidine in position 1402 (C1402) of 16S rRNA.</text>
</comment>
<comment type="catalytic activity">
    <reaction evidence="1">
        <text>cytidine(1402) in 16S rRNA + S-adenosyl-L-methionine = N(4)-methylcytidine(1402) in 16S rRNA + S-adenosyl-L-homocysteine + H(+)</text>
        <dbReference type="Rhea" id="RHEA:42928"/>
        <dbReference type="Rhea" id="RHEA-COMP:10286"/>
        <dbReference type="Rhea" id="RHEA-COMP:10287"/>
        <dbReference type="ChEBI" id="CHEBI:15378"/>
        <dbReference type="ChEBI" id="CHEBI:57856"/>
        <dbReference type="ChEBI" id="CHEBI:59789"/>
        <dbReference type="ChEBI" id="CHEBI:74506"/>
        <dbReference type="ChEBI" id="CHEBI:82748"/>
        <dbReference type="EC" id="2.1.1.199"/>
    </reaction>
</comment>
<comment type="subcellular location">
    <subcellularLocation>
        <location evidence="1">Cytoplasm</location>
    </subcellularLocation>
</comment>
<comment type="similarity">
    <text evidence="1">Belongs to the methyltransferase superfamily. RsmH family.</text>
</comment>
<protein>
    <recommendedName>
        <fullName evidence="1">Ribosomal RNA small subunit methyltransferase H</fullName>
        <ecNumber evidence="1">2.1.1.199</ecNumber>
    </recommendedName>
    <alternativeName>
        <fullName evidence="1">16S rRNA m(4)C1402 methyltransferase</fullName>
    </alternativeName>
    <alternativeName>
        <fullName evidence="1">rRNA (cytosine-N(4)-)-methyltransferase RsmH</fullName>
    </alternativeName>
</protein>
<keyword id="KW-0963">Cytoplasm</keyword>
<keyword id="KW-0489">Methyltransferase</keyword>
<keyword id="KW-0698">rRNA processing</keyword>
<keyword id="KW-0949">S-adenosyl-L-methionine</keyword>
<keyword id="KW-0808">Transferase</keyword>
<reference key="1">
    <citation type="journal article" date="2005" name="Proc. Natl. Acad. Sci. U.S.A.">
        <title>The genome of the heartwater agent Ehrlichia ruminantium contains multiple tandem repeats of actively variable copy number.</title>
        <authorList>
            <person name="Collins N.E."/>
            <person name="Liebenberg J."/>
            <person name="de Villiers E.P."/>
            <person name="Brayton K.A."/>
            <person name="Louw E."/>
            <person name="Pretorius A."/>
            <person name="Faber F.E."/>
            <person name="van Heerden H."/>
            <person name="Josemans A."/>
            <person name="van Kleef M."/>
            <person name="Steyn H.C."/>
            <person name="van Strijp M.F."/>
            <person name="Zweygarth E."/>
            <person name="Jongejan F."/>
            <person name="Maillard J.C."/>
            <person name="Berthier D."/>
            <person name="Botha M."/>
            <person name="Joubert F."/>
            <person name="Corton C.H."/>
            <person name="Thomson N.R."/>
            <person name="Allsopp M.T."/>
            <person name="Allsopp B.A."/>
        </authorList>
    </citation>
    <scope>NUCLEOTIDE SEQUENCE [LARGE SCALE GENOMIC DNA]</scope>
    <source>
        <strain>Welgevonden</strain>
    </source>
</reference>
<reference key="2">
    <citation type="journal article" date="2006" name="J. Bacteriol.">
        <title>Comparative genomic analysis of three strains of Ehrlichia ruminantium reveals an active process of genome size plasticity.</title>
        <authorList>
            <person name="Frutos R."/>
            <person name="Viari A."/>
            <person name="Ferraz C."/>
            <person name="Morgat A."/>
            <person name="Eychenie S."/>
            <person name="Kandassamy Y."/>
            <person name="Chantal I."/>
            <person name="Bensaid A."/>
            <person name="Coissac E."/>
            <person name="Vachiery N."/>
            <person name="Demaille J."/>
            <person name="Martinez D."/>
        </authorList>
    </citation>
    <scope>NUCLEOTIDE SEQUENCE [LARGE SCALE GENOMIC DNA]</scope>
    <source>
        <strain>Welgevonden</strain>
    </source>
</reference>
<proteinExistence type="inferred from homology"/>
<organism>
    <name type="scientific">Ehrlichia ruminantium (strain Welgevonden)</name>
    <dbReference type="NCBI Taxonomy" id="254945"/>
    <lineage>
        <taxon>Bacteria</taxon>
        <taxon>Pseudomonadati</taxon>
        <taxon>Pseudomonadota</taxon>
        <taxon>Alphaproteobacteria</taxon>
        <taxon>Rickettsiales</taxon>
        <taxon>Anaplasmataceae</taxon>
        <taxon>Ehrlichia</taxon>
    </lineage>
</organism>
<sequence length="301" mass="33736">MYHTPVLLKEMLDILSPQNGGIYVDATFGSGGYSRAILNSADCQVYAIDQDEYTYTFYEKLSNDFPNRIHFFINKFSKIQQILNNVQIKKVDGVVFDIGVSSMQLEDASRGFSFSKNGPLDMRMSTSLSGVDARMFVNTVSEVEMANVIYQYGGEKYSRKIARAIVNARNKNMINTTGELASIIRSVVSRSKNHSIDPATRTFQAIRIWVNKELEELEKGIACAANILNQGGKIIVISFHSLEDRIVKVIFKLLCDGKSVNLLNLGLGFQLINKKIIRPTAEEIHSNPRARSAKLRAILKL</sequence>